<evidence type="ECO:0000255" key="1">
    <source>
        <dbReference type="HAMAP-Rule" id="MF_00903"/>
    </source>
</evidence>
<accession>P0A845</accession>
<accession>P25895</accession>
<accession>P77420</accession>
<feature type="chain" id="PRO_0000097974" description="Probable Sec-independent protein translocase protein TatE">
    <location>
        <begin position="1"/>
        <end position="67"/>
    </location>
</feature>
<feature type="transmembrane region" description="Helical" evidence="1">
    <location>
        <begin position="4"/>
        <end position="21"/>
    </location>
</feature>
<keyword id="KW-0997">Cell inner membrane</keyword>
<keyword id="KW-1003">Cell membrane</keyword>
<keyword id="KW-0472">Membrane</keyword>
<keyword id="KW-0653">Protein transport</keyword>
<keyword id="KW-1185">Reference proteome</keyword>
<keyword id="KW-0811">Translocation</keyword>
<keyword id="KW-0812">Transmembrane</keyword>
<keyword id="KW-1133">Transmembrane helix</keyword>
<keyword id="KW-0813">Transport</keyword>
<proteinExistence type="inferred from homology"/>
<organism>
    <name type="scientific">Escherichia coli O157:H7</name>
    <dbReference type="NCBI Taxonomy" id="83334"/>
    <lineage>
        <taxon>Bacteria</taxon>
        <taxon>Pseudomonadati</taxon>
        <taxon>Pseudomonadota</taxon>
        <taxon>Gammaproteobacteria</taxon>
        <taxon>Enterobacterales</taxon>
        <taxon>Enterobacteriaceae</taxon>
        <taxon>Escherichia</taxon>
    </lineage>
</organism>
<dbReference type="EMBL" id="AE005174">
    <property type="protein sequence ID" value="AAG54961.1"/>
    <property type="molecule type" value="Genomic_DNA"/>
</dbReference>
<dbReference type="EMBL" id="BA000007">
    <property type="protein sequence ID" value="BAB34088.1"/>
    <property type="molecule type" value="Genomic_DNA"/>
</dbReference>
<dbReference type="PIR" id="A90712">
    <property type="entry name" value="A90712"/>
</dbReference>
<dbReference type="PIR" id="E85562">
    <property type="entry name" value="E85562"/>
</dbReference>
<dbReference type="RefSeq" id="NP_308692.1">
    <property type="nucleotide sequence ID" value="NC_002695.1"/>
</dbReference>
<dbReference type="RefSeq" id="WP_000503931.1">
    <property type="nucleotide sequence ID" value="NZ_VOAI01000012.1"/>
</dbReference>
<dbReference type="SMR" id="P0A845"/>
<dbReference type="STRING" id="155864.Z0772"/>
<dbReference type="GeneID" id="917025"/>
<dbReference type="GeneID" id="93776856"/>
<dbReference type="KEGG" id="ece:Z0772"/>
<dbReference type="KEGG" id="ecs:ECs_0665"/>
<dbReference type="PATRIC" id="fig|386585.9.peg.776"/>
<dbReference type="eggNOG" id="COG1826">
    <property type="taxonomic scope" value="Bacteria"/>
</dbReference>
<dbReference type="HOGENOM" id="CLU_086034_5_3_6"/>
<dbReference type="OMA" id="RDEDKPN"/>
<dbReference type="Proteomes" id="UP000000558">
    <property type="component" value="Chromosome"/>
</dbReference>
<dbReference type="Proteomes" id="UP000002519">
    <property type="component" value="Chromosome"/>
</dbReference>
<dbReference type="GO" id="GO:0033281">
    <property type="term" value="C:TAT protein transport complex"/>
    <property type="evidence" value="ECO:0007669"/>
    <property type="project" value="UniProtKB-UniRule"/>
</dbReference>
<dbReference type="GO" id="GO:0008320">
    <property type="term" value="F:protein transmembrane transporter activity"/>
    <property type="evidence" value="ECO:0007669"/>
    <property type="project" value="UniProtKB-UniRule"/>
</dbReference>
<dbReference type="GO" id="GO:0043953">
    <property type="term" value="P:protein transport by the Tat complex"/>
    <property type="evidence" value="ECO:0007669"/>
    <property type="project" value="UniProtKB-UniRule"/>
</dbReference>
<dbReference type="FunFam" id="1.20.5.3310:FF:000001">
    <property type="entry name" value="Probable Sec-independent protein translocase protein TatE"/>
    <property type="match status" value="1"/>
</dbReference>
<dbReference type="Gene3D" id="1.20.5.3310">
    <property type="match status" value="1"/>
</dbReference>
<dbReference type="HAMAP" id="MF_00236">
    <property type="entry name" value="TatA_E"/>
    <property type="match status" value="1"/>
</dbReference>
<dbReference type="HAMAP" id="MF_00903">
    <property type="entry name" value="TatE"/>
    <property type="match status" value="1"/>
</dbReference>
<dbReference type="InterPro" id="IPR003369">
    <property type="entry name" value="TatA/B/E"/>
</dbReference>
<dbReference type="InterPro" id="IPR006312">
    <property type="entry name" value="TatA/E"/>
</dbReference>
<dbReference type="InterPro" id="IPR024905">
    <property type="entry name" value="TatE"/>
</dbReference>
<dbReference type="NCBIfam" id="NF002448">
    <property type="entry name" value="PRK01614.1"/>
    <property type="match status" value="1"/>
</dbReference>
<dbReference type="NCBIfam" id="NF002960">
    <property type="entry name" value="PRK03625.1"/>
    <property type="match status" value="1"/>
</dbReference>
<dbReference type="NCBIfam" id="TIGR01411">
    <property type="entry name" value="tatAE"/>
    <property type="match status" value="1"/>
</dbReference>
<dbReference type="PANTHER" id="PTHR42982">
    <property type="entry name" value="SEC-INDEPENDENT PROTEIN TRANSLOCASE PROTEIN TATA"/>
    <property type="match status" value="1"/>
</dbReference>
<dbReference type="PANTHER" id="PTHR42982:SF5">
    <property type="entry name" value="SEC-INDEPENDENT PROTEIN TRANSLOCASE PROTEIN TATE"/>
    <property type="match status" value="1"/>
</dbReference>
<dbReference type="Pfam" id="PF02416">
    <property type="entry name" value="TatA_B_E"/>
    <property type="match status" value="1"/>
</dbReference>
<gene>
    <name evidence="1" type="primary">tatE</name>
    <name type="ordered locus">Z0772</name>
    <name type="ordered locus">ECs0665</name>
</gene>
<reference key="1">
    <citation type="journal article" date="2001" name="Nature">
        <title>Genome sequence of enterohaemorrhagic Escherichia coli O157:H7.</title>
        <authorList>
            <person name="Perna N.T."/>
            <person name="Plunkett G. III"/>
            <person name="Burland V."/>
            <person name="Mau B."/>
            <person name="Glasner J.D."/>
            <person name="Rose D.J."/>
            <person name="Mayhew G.F."/>
            <person name="Evans P.S."/>
            <person name="Gregor J."/>
            <person name="Kirkpatrick H.A."/>
            <person name="Posfai G."/>
            <person name="Hackett J."/>
            <person name="Klink S."/>
            <person name="Boutin A."/>
            <person name="Shao Y."/>
            <person name="Miller L."/>
            <person name="Grotbeck E.J."/>
            <person name="Davis N.W."/>
            <person name="Lim A."/>
            <person name="Dimalanta E.T."/>
            <person name="Potamousis K."/>
            <person name="Apodaca J."/>
            <person name="Anantharaman T.S."/>
            <person name="Lin J."/>
            <person name="Yen G."/>
            <person name="Schwartz D.C."/>
            <person name="Welch R.A."/>
            <person name="Blattner F.R."/>
        </authorList>
    </citation>
    <scope>NUCLEOTIDE SEQUENCE [LARGE SCALE GENOMIC DNA]</scope>
    <source>
        <strain>O157:H7 / EDL933 / ATCC 700927 / EHEC</strain>
    </source>
</reference>
<reference key="2">
    <citation type="journal article" date="2001" name="DNA Res.">
        <title>Complete genome sequence of enterohemorrhagic Escherichia coli O157:H7 and genomic comparison with a laboratory strain K-12.</title>
        <authorList>
            <person name="Hayashi T."/>
            <person name="Makino K."/>
            <person name="Ohnishi M."/>
            <person name="Kurokawa K."/>
            <person name="Ishii K."/>
            <person name="Yokoyama K."/>
            <person name="Han C.-G."/>
            <person name="Ohtsubo E."/>
            <person name="Nakayama K."/>
            <person name="Murata T."/>
            <person name="Tanaka M."/>
            <person name="Tobe T."/>
            <person name="Iida T."/>
            <person name="Takami H."/>
            <person name="Honda T."/>
            <person name="Sasakawa C."/>
            <person name="Ogasawara N."/>
            <person name="Yasunaga T."/>
            <person name="Kuhara S."/>
            <person name="Shiba T."/>
            <person name="Hattori M."/>
            <person name="Shinagawa H."/>
        </authorList>
    </citation>
    <scope>NUCLEOTIDE SEQUENCE [LARGE SCALE GENOMIC DNA]</scope>
    <source>
        <strain>O157:H7 / Sakai / RIMD 0509952 / EHEC</strain>
    </source>
</reference>
<name>TATE_ECO57</name>
<protein>
    <recommendedName>
        <fullName evidence="1">Probable Sec-independent protein translocase protein TatE</fullName>
    </recommendedName>
</protein>
<sequence>MGEISITKLLVVAALVVLLFGTKKLRTLGGDLGAAIKGFKKAMNDDDAAAKKGADVDLQAEKLSHKE</sequence>
<comment type="function">
    <text evidence="1">Part of the twin-arginine translocation (Tat) system that transports large folded proteins containing a characteristic twin-arginine motif in their signal peptide across membranes. TatE shares overlapping functions with TatA.</text>
</comment>
<comment type="subcellular location">
    <subcellularLocation>
        <location evidence="1">Cell inner membrane</location>
        <topology evidence="1">Single-pass membrane protein</topology>
    </subcellularLocation>
</comment>
<comment type="similarity">
    <text evidence="1">Belongs to the TatA/E family. TatE subfamily.</text>
</comment>